<comment type="function">
    <text evidence="2">Component of the ubiquinol-cytochrome c reductase complex (complex III or cytochrome b-c1 complex) that is part of the mitochondrial respiratory chain. The b-c1 complex mediates electron transfer from ubiquinol to cytochrome c. Contributes to the generation of a proton gradient across the mitochondrial membrane that is then used for ATP synthesis.</text>
</comment>
<comment type="cofactor">
    <cofactor evidence="2">
        <name>heme b</name>
        <dbReference type="ChEBI" id="CHEBI:60344"/>
    </cofactor>
    <text evidence="2">Binds 2 heme b groups non-covalently.</text>
</comment>
<comment type="subunit">
    <text evidence="2">The cytochrome bc1 complex contains 11 subunits: 3 respiratory subunits (MT-CYB, CYC1 and UQCRFS1), 2 core proteins (UQCRC1 and UQCRC2) and 6 low-molecular weight proteins (UQCRH/QCR6, UQCRB/QCR7, UQCRQ/QCR8, UQCR10/QCR9, UQCR11/QCR10 and a cleavage product of UQCRFS1). This cytochrome bc1 complex then forms a dimer.</text>
</comment>
<comment type="subcellular location">
    <subcellularLocation>
        <location evidence="2">Mitochondrion inner membrane</location>
        <topology evidence="2">Multi-pass membrane protein</topology>
    </subcellularLocation>
</comment>
<comment type="miscellaneous">
    <text evidence="1">Heme 1 (or BL or b562) is low-potential and absorbs at about 562 nm, and heme 2 (or BH or b566) is high-potential and absorbs at about 566 nm.</text>
</comment>
<comment type="similarity">
    <text evidence="3 4">Belongs to the cytochrome b family.</text>
</comment>
<comment type="caution">
    <text evidence="2">The full-length protein contains only eight transmembrane helices, not nine as predicted by bioinformatics tools.</text>
</comment>
<sequence length="379" mass="42651">MTNIRKSHPLIKIVNESFIDLPTPSNISAWWNFGSLLGICLILQILTGLFLAMHYTSDTTTAFSSVTHICRDVNYGWIIRYMHANGASMFFICLYMHIGRGMYYGSYTLPETWNIGILLLFTVMATAFMGYVLPWGQMSFWGATVITNLLSAIPYIGTNLVEWVWGGSSVDKATLTRFFALHFILPFIILAVATVHLLFLHETGSNNPSGMTSDTDKIPFHPYYTTKDILGLLLLILMLLLLVLFSPDLLGDPDNYTPANPLNTPPHIKPEWYFLFAYAILRSIPNKLGGVLALTLSILILAMVPLLHTSKQRGMTFRPISQCLFWLLVVDLLTLTWIGGQPVEHPYTIIGQLASIMYFSIILILMPISGIIENHLLNW</sequence>
<geneLocation type="mitochondrion"/>
<evidence type="ECO:0000250" key="1"/>
<evidence type="ECO:0000250" key="2">
    <source>
        <dbReference type="UniProtKB" id="P00157"/>
    </source>
</evidence>
<evidence type="ECO:0000255" key="3">
    <source>
        <dbReference type="PROSITE-ProRule" id="PRU00967"/>
    </source>
</evidence>
<evidence type="ECO:0000255" key="4">
    <source>
        <dbReference type="PROSITE-ProRule" id="PRU00968"/>
    </source>
</evidence>
<protein>
    <recommendedName>
        <fullName>Cytochrome b</fullName>
    </recommendedName>
    <alternativeName>
        <fullName>Complex III subunit 3</fullName>
    </alternativeName>
    <alternativeName>
        <fullName>Complex III subunit III</fullName>
    </alternativeName>
    <alternativeName>
        <fullName>Cytochrome b-c1 complex subunit 3</fullName>
    </alternativeName>
    <alternativeName>
        <fullName>Ubiquinol-cytochrome-c reductase complex cytochrome b subunit</fullName>
    </alternativeName>
</protein>
<reference key="1">
    <citation type="journal article" date="2004" name="Zool. Scr.">
        <title>First molecular evidence for reassessing phylogenetic affinities between genets (Genetta) and the enigmatic genet-like taxa Osbornictis, Poiana and Prionodon (Carnivora, Viverridae).</title>
        <authorList>
            <person name="Gaubert P."/>
            <person name="Tranier M."/>
            <person name="Delmas A.-S."/>
            <person name="Colyn M."/>
            <person name="Veron G."/>
        </authorList>
    </citation>
    <scope>NUCLEOTIDE SEQUENCE [GENOMIC DNA]</scope>
</reference>
<proteinExistence type="inferred from homology"/>
<keyword id="KW-0249">Electron transport</keyword>
<keyword id="KW-0349">Heme</keyword>
<keyword id="KW-0408">Iron</keyword>
<keyword id="KW-0472">Membrane</keyword>
<keyword id="KW-0479">Metal-binding</keyword>
<keyword id="KW-0496">Mitochondrion</keyword>
<keyword id="KW-0999">Mitochondrion inner membrane</keyword>
<keyword id="KW-0679">Respiratory chain</keyword>
<keyword id="KW-0812">Transmembrane</keyword>
<keyword id="KW-1133">Transmembrane helix</keyword>
<keyword id="KW-0813">Transport</keyword>
<keyword id="KW-0830">Ubiquinone</keyword>
<feature type="chain" id="PRO_0000254792" description="Cytochrome b">
    <location>
        <begin position="1"/>
        <end position="379"/>
    </location>
</feature>
<feature type="transmembrane region" description="Helical" evidence="2">
    <location>
        <begin position="33"/>
        <end position="53"/>
    </location>
</feature>
<feature type="transmembrane region" description="Helical" evidence="2">
    <location>
        <begin position="77"/>
        <end position="98"/>
    </location>
</feature>
<feature type="transmembrane region" description="Helical" evidence="2">
    <location>
        <begin position="113"/>
        <end position="133"/>
    </location>
</feature>
<feature type="transmembrane region" description="Helical" evidence="2">
    <location>
        <begin position="178"/>
        <end position="198"/>
    </location>
</feature>
<feature type="transmembrane region" description="Helical" evidence="2">
    <location>
        <begin position="226"/>
        <end position="246"/>
    </location>
</feature>
<feature type="transmembrane region" description="Helical" evidence="2">
    <location>
        <begin position="288"/>
        <end position="308"/>
    </location>
</feature>
<feature type="transmembrane region" description="Helical" evidence="2">
    <location>
        <begin position="320"/>
        <end position="340"/>
    </location>
</feature>
<feature type="transmembrane region" description="Helical" evidence="2">
    <location>
        <begin position="347"/>
        <end position="367"/>
    </location>
</feature>
<feature type="binding site" description="axial binding residue" evidence="2">
    <location>
        <position position="83"/>
    </location>
    <ligand>
        <name>heme b</name>
        <dbReference type="ChEBI" id="CHEBI:60344"/>
        <label>b562</label>
    </ligand>
    <ligandPart>
        <name>Fe</name>
        <dbReference type="ChEBI" id="CHEBI:18248"/>
    </ligandPart>
</feature>
<feature type="binding site" description="axial binding residue" evidence="2">
    <location>
        <position position="97"/>
    </location>
    <ligand>
        <name>heme b</name>
        <dbReference type="ChEBI" id="CHEBI:60344"/>
        <label>b566</label>
    </ligand>
    <ligandPart>
        <name>Fe</name>
        <dbReference type="ChEBI" id="CHEBI:18248"/>
    </ligandPart>
</feature>
<feature type="binding site" description="axial binding residue" evidence="2">
    <location>
        <position position="182"/>
    </location>
    <ligand>
        <name>heme b</name>
        <dbReference type="ChEBI" id="CHEBI:60344"/>
        <label>b562</label>
    </ligand>
    <ligandPart>
        <name>Fe</name>
        <dbReference type="ChEBI" id="CHEBI:18248"/>
    </ligandPart>
</feature>
<feature type="binding site" description="axial binding residue" evidence="2">
    <location>
        <position position="196"/>
    </location>
    <ligand>
        <name>heme b</name>
        <dbReference type="ChEBI" id="CHEBI:60344"/>
        <label>b566</label>
    </ligand>
    <ligandPart>
        <name>Fe</name>
        <dbReference type="ChEBI" id="CHEBI:18248"/>
    </ligandPart>
</feature>
<feature type="binding site" evidence="2">
    <location>
        <position position="201"/>
    </location>
    <ligand>
        <name>a ubiquinone</name>
        <dbReference type="ChEBI" id="CHEBI:16389"/>
    </ligand>
</feature>
<gene>
    <name type="primary">MT-CYB</name>
    <name type="synonym">COB</name>
    <name type="synonym">CYTB</name>
    <name type="synonym">MTCYB</name>
</gene>
<name>CYB_CROCR</name>
<organism>
    <name type="scientific">Crocuta crocuta</name>
    <name type="common">Spotted hyena</name>
    <dbReference type="NCBI Taxonomy" id="9678"/>
    <lineage>
        <taxon>Eukaryota</taxon>
        <taxon>Metazoa</taxon>
        <taxon>Chordata</taxon>
        <taxon>Craniata</taxon>
        <taxon>Vertebrata</taxon>
        <taxon>Euteleostomi</taxon>
        <taxon>Mammalia</taxon>
        <taxon>Eutheria</taxon>
        <taxon>Laurasiatheria</taxon>
        <taxon>Carnivora</taxon>
        <taxon>Feliformia</taxon>
        <taxon>Hyaenidae</taxon>
        <taxon>Crocuta</taxon>
    </lineage>
</organism>
<accession>Q71FH1</accession>
<dbReference type="EMBL" id="AF511064">
    <property type="protein sequence ID" value="AAQ08040.1"/>
    <property type="molecule type" value="Genomic_DNA"/>
</dbReference>
<dbReference type="SMR" id="Q71FH1"/>
<dbReference type="GO" id="GO:0005743">
    <property type="term" value="C:mitochondrial inner membrane"/>
    <property type="evidence" value="ECO:0007669"/>
    <property type="project" value="UniProtKB-SubCell"/>
</dbReference>
<dbReference type="GO" id="GO:0045275">
    <property type="term" value="C:respiratory chain complex III"/>
    <property type="evidence" value="ECO:0007669"/>
    <property type="project" value="InterPro"/>
</dbReference>
<dbReference type="GO" id="GO:0046872">
    <property type="term" value="F:metal ion binding"/>
    <property type="evidence" value="ECO:0007669"/>
    <property type="project" value="UniProtKB-KW"/>
</dbReference>
<dbReference type="GO" id="GO:0008121">
    <property type="term" value="F:ubiquinol-cytochrome-c reductase activity"/>
    <property type="evidence" value="ECO:0007669"/>
    <property type="project" value="InterPro"/>
</dbReference>
<dbReference type="GO" id="GO:0006122">
    <property type="term" value="P:mitochondrial electron transport, ubiquinol to cytochrome c"/>
    <property type="evidence" value="ECO:0007669"/>
    <property type="project" value="TreeGrafter"/>
</dbReference>
<dbReference type="CDD" id="cd00290">
    <property type="entry name" value="cytochrome_b_C"/>
    <property type="match status" value="1"/>
</dbReference>
<dbReference type="CDD" id="cd00284">
    <property type="entry name" value="Cytochrome_b_N"/>
    <property type="match status" value="1"/>
</dbReference>
<dbReference type="FunFam" id="1.20.810.10:FF:000002">
    <property type="entry name" value="Cytochrome b"/>
    <property type="match status" value="1"/>
</dbReference>
<dbReference type="Gene3D" id="1.20.810.10">
    <property type="entry name" value="Cytochrome Bc1 Complex, Chain C"/>
    <property type="match status" value="1"/>
</dbReference>
<dbReference type="InterPro" id="IPR005798">
    <property type="entry name" value="Cyt_b/b6_C"/>
</dbReference>
<dbReference type="InterPro" id="IPR036150">
    <property type="entry name" value="Cyt_b/b6_C_sf"/>
</dbReference>
<dbReference type="InterPro" id="IPR005797">
    <property type="entry name" value="Cyt_b/b6_N"/>
</dbReference>
<dbReference type="InterPro" id="IPR027387">
    <property type="entry name" value="Cytb/b6-like_sf"/>
</dbReference>
<dbReference type="InterPro" id="IPR030689">
    <property type="entry name" value="Cytochrome_b"/>
</dbReference>
<dbReference type="InterPro" id="IPR048260">
    <property type="entry name" value="Cytochrome_b_C_euk/bac"/>
</dbReference>
<dbReference type="InterPro" id="IPR048259">
    <property type="entry name" value="Cytochrome_b_N_euk/bac"/>
</dbReference>
<dbReference type="InterPro" id="IPR016174">
    <property type="entry name" value="Di-haem_cyt_TM"/>
</dbReference>
<dbReference type="PANTHER" id="PTHR19271">
    <property type="entry name" value="CYTOCHROME B"/>
    <property type="match status" value="1"/>
</dbReference>
<dbReference type="PANTHER" id="PTHR19271:SF16">
    <property type="entry name" value="CYTOCHROME B"/>
    <property type="match status" value="1"/>
</dbReference>
<dbReference type="Pfam" id="PF00032">
    <property type="entry name" value="Cytochrom_B_C"/>
    <property type="match status" value="1"/>
</dbReference>
<dbReference type="Pfam" id="PF00033">
    <property type="entry name" value="Cytochrome_B"/>
    <property type="match status" value="1"/>
</dbReference>
<dbReference type="PIRSF" id="PIRSF038885">
    <property type="entry name" value="COB"/>
    <property type="match status" value="1"/>
</dbReference>
<dbReference type="SUPFAM" id="SSF81648">
    <property type="entry name" value="a domain/subunit of cytochrome bc1 complex (Ubiquinol-cytochrome c reductase)"/>
    <property type="match status" value="1"/>
</dbReference>
<dbReference type="SUPFAM" id="SSF81342">
    <property type="entry name" value="Transmembrane di-heme cytochromes"/>
    <property type="match status" value="1"/>
</dbReference>
<dbReference type="PROSITE" id="PS51003">
    <property type="entry name" value="CYTB_CTER"/>
    <property type="match status" value="1"/>
</dbReference>
<dbReference type="PROSITE" id="PS51002">
    <property type="entry name" value="CYTB_NTER"/>
    <property type="match status" value="1"/>
</dbReference>